<name>ECR_LUCCU</name>
<gene>
    <name type="primary">EcR</name>
    <name type="synonym">NR1H1</name>
</gene>
<feature type="chain" id="PRO_0000053529" description="Ecdysone receptor">
    <location>
        <begin position="1"/>
        <end position="757"/>
    </location>
</feature>
<feature type="domain" description="NR LBD" evidence="4">
    <location>
        <begin position="442"/>
        <end position="677"/>
    </location>
</feature>
<feature type="DNA-binding region" description="Nuclear receptor" evidence="3">
    <location>
        <begin position="301"/>
        <end position="373"/>
    </location>
</feature>
<feature type="zinc finger region" description="NR C4-type" evidence="3">
    <location>
        <begin position="301"/>
        <end position="321"/>
    </location>
</feature>
<feature type="zinc finger region" description="NR C4-type" evidence="3">
    <location>
        <begin position="337"/>
        <end position="361"/>
    </location>
</feature>
<feature type="region of interest" description="Modulating" evidence="2">
    <location>
        <begin position="1"/>
        <end position="300"/>
    </location>
</feature>
<feature type="region of interest" description="Disordered" evidence="5">
    <location>
        <begin position="126"/>
        <end position="192"/>
    </location>
</feature>
<feature type="region of interest" description="Disordered" evidence="5">
    <location>
        <begin position="235"/>
        <end position="289"/>
    </location>
</feature>
<feature type="region of interest" description="Disordered" evidence="5">
    <location>
        <begin position="717"/>
        <end position="739"/>
    </location>
</feature>
<feature type="compositionally biased region" description="Gly residues" evidence="5">
    <location>
        <begin position="128"/>
        <end position="138"/>
    </location>
</feature>
<feature type="compositionally biased region" description="Low complexity" evidence="5">
    <location>
        <begin position="167"/>
        <end position="183"/>
    </location>
</feature>
<feature type="compositionally biased region" description="Low complexity" evidence="5">
    <location>
        <begin position="717"/>
        <end position="734"/>
    </location>
</feature>
<evidence type="ECO:0000250" key="1"/>
<evidence type="ECO:0000255" key="2"/>
<evidence type="ECO:0000255" key="3">
    <source>
        <dbReference type="PROSITE-ProRule" id="PRU00407"/>
    </source>
</evidence>
<evidence type="ECO:0000255" key="4">
    <source>
        <dbReference type="PROSITE-ProRule" id="PRU01189"/>
    </source>
</evidence>
<evidence type="ECO:0000256" key="5">
    <source>
        <dbReference type="SAM" id="MobiDB-lite"/>
    </source>
</evidence>
<evidence type="ECO:0000305" key="6"/>
<reference key="1">
    <citation type="journal article" date="1997" name="Insect Biochem. Mol. Biol.">
        <title>Cloning and characterization of LcEcR: a functional ecdysone receptor from the sheep blowfly Lucilia cuprina.</title>
        <authorList>
            <person name="Hannan G.N."/>
            <person name="Hill R.J."/>
        </authorList>
    </citation>
    <scope>NUCLEOTIDE SEQUENCE [MRNA]</scope>
</reference>
<reference key="2">
    <citation type="submission" date="2005-10" db="EMBL/GenBank/DDBJ databases">
        <authorList>
            <person name="Hannan G.N."/>
            <person name="Hill R.J."/>
        </authorList>
    </citation>
    <scope>SEQUENCE REVISION TO 695-731</scope>
</reference>
<proteinExistence type="evidence at transcript level"/>
<keyword id="KW-0238">DNA-binding</keyword>
<keyword id="KW-0479">Metal-binding</keyword>
<keyword id="KW-0539">Nucleus</keyword>
<keyword id="KW-0675">Receptor</keyword>
<keyword id="KW-0804">Transcription</keyword>
<keyword id="KW-0805">Transcription regulation</keyword>
<keyword id="KW-0862">Zinc</keyword>
<keyword id="KW-0863">Zinc-finger</keyword>
<protein>
    <recommendedName>
        <fullName>Ecdysone receptor</fullName>
    </recommendedName>
    <alternativeName>
        <fullName>20-hydroxy-ecdysone receptor</fullName>
        <shortName>20E receptor</shortName>
    </alternativeName>
    <alternativeName>
        <fullName>EcRH</fullName>
    </alternativeName>
    <alternativeName>
        <fullName>Ecdysteroid receptor</fullName>
    </alternativeName>
    <alternativeName>
        <fullName>Nuclear receptor subfamily 1 group H member 1</fullName>
    </alternativeName>
</protein>
<sequence length="757" mass="82581">MMKRRWSNNGGFAALKMLEESSSEVTSSSNGLVLSSDINMSPSSLDSPVYGDQEMWLCNDSASYNNSHQHSVITSLQGCTSSLPAQTTIIPLSALPNSNNASLNNQNQNYQNGNSMNTNLSVNTNNSVGGGGGGGGVPGMTSLNGLGGGGGSQVNNHNHSHNHLHHNSNSNHSNSSSHHTNGHMGIGGGGGGLSVNINGPNIVSNAQQLNSLQASQNGQVIHANIGIHSIISNGLNHHHHHHMNNSSMMHHTPRSESANSISSGRDDLSPSSSLNGFSTSDASDVKKIKKGPAPRLQEELCLVCGDRASGYHYNALTCEGCKGFFRRSVTKNAVYCCKFGHACEMDMYMRRKCQECRLKKCLAVGMRPECVVPENQCAMKRREKKAQKEKDKIQTSVCATEIKKEILDLMTCEPPSHPTCPLLPEDILAKCQARNIPPLSYNQLAVIYKLIWYQDGYEQPSEEDLKRIMSSPDENESQHDASFRHITEITILTVQLIVEFAKGLPAFTKIPQEDQITLLKACSSEVMMLRMARRYDHNSDSIFFANNRSYTRDSYKMAGMADNIEDLLHFCRQMYSMKVDNVEYALLTAIVIFSDRPGLEEAELVEAIQSYYIDTLRIYILNRHCGDPMSLVFFAKLLSILTELRTLGNQNAEMCFSLKLKNRKLPKFLEEIWDVHAIPPSVQSHIQATQAEKAAQEAQATTSAISAAATSSSSINTSMATSSSSSLSPSAASTPNGGAVDYVGTDMSMSLVQSDNA</sequence>
<dbReference type="EMBL" id="U75355">
    <property type="protein sequence ID" value="AAB81130.2"/>
    <property type="molecule type" value="mRNA"/>
</dbReference>
<dbReference type="SMR" id="O18531"/>
<dbReference type="BindingDB" id="O18531"/>
<dbReference type="ChEMBL" id="CHEMBL1250403"/>
<dbReference type="OrthoDB" id="5837785at2759"/>
<dbReference type="GO" id="GO:0090575">
    <property type="term" value="C:RNA polymerase II transcription regulator complex"/>
    <property type="evidence" value="ECO:0007669"/>
    <property type="project" value="TreeGrafter"/>
</dbReference>
<dbReference type="GO" id="GO:0035100">
    <property type="term" value="F:ecdysone binding"/>
    <property type="evidence" value="ECO:0007669"/>
    <property type="project" value="InterPro"/>
</dbReference>
<dbReference type="GO" id="GO:0004879">
    <property type="term" value="F:nuclear receptor activity"/>
    <property type="evidence" value="ECO:0007669"/>
    <property type="project" value="InterPro"/>
</dbReference>
<dbReference type="GO" id="GO:0000978">
    <property type="term" value="F:RNA polymerase II cis-regulatory region sequence-specific DNA binding"/>
    <property type="evidence" value="ECO:0007669"/>
    <property type="project" value="TreeGrafter"/>
</dbReference>
<dbReference type="GO" id="GO:0008270">
    <property type="term" value="F:zinc ion binding"/>
    <property type="evidence" value="ECO:0007669"/>
    <property type="project" value="UniProtKB-KW"/>
</dbReference>
<dbReference type="GO" id="GO:0030154">
    <property type="term" value="P:cell differentiation"/>
    <property type="evidence" value="ECO:0007669"/>
    <property type="project" value="TreeGrafter"/>
</dbReference>
<dbReference type="GO" id="GO:0035076">
    <property type="term" value="P:ecdysone receptor signaling pathway"/>
    <property type="evidence" value="ECO:0007669"/>
    <property type="project" value="InterPro"/>
</dbReference>
<dbReference type="GO" id="GO:0000122">
    <property type="term" value="P:negative regulation of transcription by RNA polymerase II"/>
    <property type="evidence" value="ECO:0007669"/>
    <property type="project" value="TreeGrafter"/>
</dbReference>
<dbReference type="GO" id="GO:0045944">
    <property type="term" value="P:positive regulation of transcription by RNA polymerase II"/>
    <property type="evidence" value="ECO:0007669"/>
    <property type="project" value="TreeGrafter"/>
</dbReference>
<dbReference type="CDD" id="cd07161">
    <property type="entry name" value="NR_DBD_EcR"/>
    <property type="match status" value="1"/>
</dbReference>
<dbReference type="CDD" id="cd06938">
    <property type="entry name" value="NR_LBD_EcR"/>
    <property type="match status" value="1"/>
</dbReference>
<dbReference type="FunFam" id="1.10.565.10:FF:000030">
    <property type="entry name" value="Ecdysone receptor (Isoform A)"/>
    <property type="match status" value="1"/>
</dbReference>
<dbReference type="FunFam" id="3.30.50.10:FF:000031">
    <property type="entry name" value="Ecdysone receptor A1"/>
    <property type="match status" value="1"/>
</dbReference>
<dbReference type="Gene3D" id="3.30.50.10">
    <property type="entry name" value="Erythroid Transcription Factor GATA-1, subunit A"/>
    <property type="match status" value="1"/>
</dbReference>
<dbReference type="Gene3D" id="1.10.565.10">
    <property type="entry name" value="Retinoid X Receptor"/>
    <property type="match status" value="1"/>
</dbReference>
<dbReference type="InterPro" id="IPR003069">
    <property type="entry name" value="Ecdystd_rcpt"/>
</dbReference>
<dbReference type="InterPro" id="IPR035500">
    <property type="entry name" value="NHR-like_dom_sf"/>
</dbReference>
<dbReference type="InterPro" id="IPR041889">
    <property type="entry name" value="NR_LBD_EcR"/>
</dbReference>
<dbReference type="InterPro" id="IPR000536">
    <property type="entry name" value="Nucl_hrmn_rcpt_lig-bd"/>
</dbReference>
<dbReference type="InterPro" id="IPR050234">
    <property type="entry name" value="Nuclear_hormone_rcpt_NR1"/>
</dbReference>
<dbReference type="InterPro" id="IPR001723">
    <property type="entry name" value="Nuclear_hrmn_rcpt"/>
</dbReference>
<dbReference type="InterPro" id="IPR001628">
    <property type="entry name" value="Znf_hrmn_rcpt"/>
</dbReference>
<dbReference type="InterPro" id="IPR013088">
    <property type="entry name" value="Znf_NHR/GATA"/>
</dbReference>
<dbReference type="PANTHER" id="PTHR24082:SF507">
    <property type="entry name" value="BILE ACID RECEPTOR-RELATED"/>
    <property type="match status" value="1"/>
</dbReference>
<dbReference type="PANTHER" id="PTHR24082">
    <property type="entry name" value="NUCLEAR HORMONE RECEPTOR"/>
    <property type="match status" value="1"/>
</dbReference>
<dbReference type="Pfam" id="PF00104">
    <property type="entry name" value="Hormone_recep"/>
    <property type="match status" value="1"/>
</dbReference>
<dbReference type="Pfam" id="PF00105">
    <property type="entry name" value="zf-C4"/>
    <property type="match status" value="1"/>
</dbReference>
<dbReference type="PRINTS" id="PR01283">
    <property type="entry name" value="ECDYSTEROIDR"/>
</dbReference>
<dbReference type="PRINTS" id="PR00398">
    <property type="entry name" value="STRDHORMONER"/>
</dbReference>
<dbReference type="PRINTS" id="PR00047">
    <property type="entry name" value="STROIDFINGER"/>
</dbReference>
<dbReference type="SMART" id="SM00430">
    <property type="entry name" value="HOLI"/>
    <property type="match status" value="1"/>
</dbReference>
<dbReference type="SMART" id="SM00399">
    <property type="entry name" value="ZnF_C4"/>
    <property type="match status" value="1"/>
</dbReference>
<dbReference type="SUPFAM" id="SSF57716">
    <property type="entry name" value="Glucocorticoid receptor-like (DNA-binding domain)"/>
    <property type="match status" value="1"/>
</dbReference>
<dbReference type="SUPFAM" id="SSF48508">
    <property type="entry name" value="Nuclear receptor ligand-binding domain"/>
    <property type="match status" value="1"/>
</dbReference>
<dbReference type="PROSITE" id="PS51843">
    <property type="entry name" value="NR_LBD"/>
    <property type="match status" value="1"/>
</dbReference>
<dbReference type="PROSITE" id="PS00031">
    <property type="entry name" value="NUCLEAR_REC_DBD_1"/>
    <property type="match status" value="1"/>
</dbReference>
<dbReference type="PROSITE" id="PS51030">
    <property type="entry name" value="NUCLEAR_REC_DBD_2"/>
    <property type="match status" value="1"/>
</dbReference>
<accession>O18531</accession>
<comment type="function">
    <text evidence="1">Receptor for ecdysone. Binds to ecdysone response elements (ECRES) (By similarity).</text>
</comment>
<comment type="subcellular location">
    <subcellularLocation>
        <location>Nucleus</location>
    </subcellularLocation>
</comment>
<comment type="similarity">
    <text evidence="6">Belongs to the nuclear hormone receptor family. NR1 subfamily.</text>
</comment>
<organism>
    <name type="scientific">Lucilia cuprina</name>
    <name type="common">Green bottle fly</name>
    <name type="synonym">Australian sheep blowfly</name>
    <dbReference type="NCBI Taxonomy" id="7375"/>
    <lineage>
        <taxon>Eukaryota</taxon>
        <taxon>Metazoa</taxon>
        <taxon>Ecdysozoa</taxon>
        <taxon>Arthropoda</taxon>
        <taxon>Hexapoda</taxon>
        <taxon>Insecta</taxon>
        <taxon>Pterygota</taxon>
        <taxon>Neoptera</taxon>
        <taxon>Endopterygota</taxon>
        <taxon>Diptera</taxon>
        <taxon>Brachycera</taxon>
        <taxon>Muscomorpha</taxon>
        <taxon>Oestroidea</taxon>
        <taxon>Calliphoridae</taxon>
        <taxon>Luciliinae</taxon>
        <taxon>Lucilia</taxon>
    </lineage>
</organism>